<sequence length="316" mass="35689">MSYVMDETEEGINIDNTQHDLELDRDSSTQQPAQTHEDDGDLLGLDKPIKLKTRAKIAKVDNQRIFNHNGIPLLVKTHSKLLRTLKKNDKNFYSEPRSSISKSQKFEHEYENLSSVLQFYQLWCHGLFPKATFKDCIHLIRALGARSPQLRLYRRELIAAELHKLKVAKGIIADENQDAPSIPEEENTTDPSNEEWNSMHMSALVPGSSNKNGLFVDSNSNEDFETTNEVNAAASLADKDALSTDDKAEQTNAITSDTHNNDVDSDDPFSDDDDINIDAHTENLHPASGTQHQDRPKETTEENEDLELELMREYGA</sequence>
<organism>
    <name type="scientific">Candida albicans (strain SC5314 / ATCC MYA-2876)</name>
    <name type="common">Yeast</name>
    <dbReference type="NCBI Taxonomy" id="237561"/>
    <lineage>
        <taxon>Eukaryota</taxon>
        <taxon>Fungi</taxon>
        <taxon>Dikarya</taxon>
        <taxon>Ascomycota</taxon>
        <taxon>Saccharomycotina</taxon>
        <taxon>Pichiomycetes</taxon>
        <taxon>Debaryomycetaceae</taxon>
        <taxon>Candida/Lodderomyces clade</taxon>
        <taxon>Candida</taxon>
    </lineage>
</organism>
<evidence type="ECO:0000250" key="1"/>
<evidence type="ECO:0000256" key="2">
    <source>
        <dbReference type="SAM" id="MobiDB-lite"/>
    </source>
</evidence>
<evidence type="ECO:0000305" key="3"/>
<feature type="chain" id="PRO_0000301714" description="Chromosome segregation in meiosis protein 3">
    <location>
        <begin position="1"/>
        <end position="316"/>
    </location>
</feature>
<feature type="region of interest" description="Disordered" evidence="2">
    <location>
        <begin position="1"/>
        <end position="42"/>
    </location>
</feature>
<feature type="region of interest" description="Disordered" evidence="2">
    <location>
        <begin position="176"/>
        <end position="195"/>
    </location>
</feature>
<feature type="region of interest" description="Disordered" evidence="2">
    <location>
        <begin position="236"/>
        <end position="316"/>
    </location>
</feature>
<feature type="compositionally biased region" description="Acidic residues" evidence="2">
    <location>
        <begin position="1"/>
        <end position="12"/>
    </location>
</feature>
<feature type="compositionally biased region" description="Basic and acidic residues" evidence="2">
    <location>
        <begin position="17"/>
        <end position="27"/>
    </location>
</feature>
<feature type="compositionally biased region" description="Basic and acidic residues" evidence="2">
    <location>
        <begin position="237"/>
        <end position="249"/>
    </location>
</feature>
<feature type="compositionally biased region" description="Acidic residues" evidence="2">
    <location>
        <begin position="263"/>
        <end position="276"/>
    </location>
</feature>
<accession>Q59X26</accession>
<accession>A0A1D8PHK5</accession>
<proteinExistence type="inferred from homology"/>
<reference key="1">
    <citation type="journal article" date="2004" name="Proc. Natl. Acad. Sci. U.S.A.">
        <title>The diploid genome sequence of Candida albicans.</title>
        <authorList>
            <person name="Jones T."/>
            <person name="Federspiel N.A."/>
            <person name="Chibana H."/>
            <person name="Dungan J."/>
            <person name="Kalman S."/>
            <person name="Magee B.B."/>
            <person name="Newport G."/>
            <person name="Thorstenson Y.R."/>
            <person name="Agabian N."/>
            <person name="Magee P.T."/>
            <person name="Davis R.W."/>
            <person name="Scherer S."/>
        </authorList>
    </citation>
    <scope>NUCLEOTIDE SEQUENCE [LARGE SCALE GENOMIC DNA]</scope>
    <source>
        <strain>SC5314 / ATCC MYA-2876</strain>
    </source>
</reference>
<reference key="2">
    <citation type="journal article" date="2007" name="Genome Biol.">
        <title>Assembly of the Candida albicans genome into sixteen supercontigs aligned on the eight chromosomes.</title>
        <authorList>
            <person name="van het Hoog M."/>
            <person name="Rast T.J."/>
            <person name="Martchenko M."/>
            <person name="Grindle S."/>
            <person name="Dignard D."/>
            <person name="Hogues H."/>
            <person name="Cuomo C."/>
            <person name="Berriman M."/>
            <person name="Scherer S."/>
            <person name="Magee B.B."/>
            <person name="Whiteway M."/>
            <person name="Chibana H."/>
            <person name="Nantel A."/>
            <person name="Magee P.T."/>
        </authorList>
    </citation>
    <scope>GENOME REANNOTATION</scope>
    <source>
        <strain>SC5314 / ATCC MYA-2876</strain>
    </source>
</reference>
<reference key="3">
    <citation type="journal article" date="2013" name="Genome Biol.">
        <title>Assembly of a phased diploid Candida albicans genome facilitates allele-specific measurements and provides a simple model for repeat and indel structure.</title>
        <authorList>
            <person name="Muzzey D."/>
            <person name="Schwartz K."/>
            <person name="Weissman J.S."/>
            <person name="Sherlock G."/>
        </authorList>
    </citation>
    <scope>NUCLEOTIDE SEQUENCE [LARGE SCALE GENOMIC DNA]</scope>
    <scope>GENOME REANNOTATION</scope>
    <source>
        <strain>SC5314 / ATCC MYA-2876</strain>
    </source>
</reference>
<dbReference type="EMBL" id="CP017624">
    <property type="protein sequence ID" value="AOW27621.1"/>
    <property type="molecule type" value="Genomic_DNA"/>
</dbReference>
<dbReference type="RefSeq" id="XP_714276.1">
    <property type="nucleotide sequence ID" value="XM_709183.1"/>
</dbReference>
<dbReference type="SMR" id="Q59X26"/>
<dbReference type="STRING" id="237561.Q59X26"/>
<dbReference type="EnsemblFungi" id="C2_06130W_A-T">
    <property type="protein sequence ID" value="C2_06130W_A-T-p1"/>
    <property type="gene ID" value="C2_06130W_A"/>
</dbReference>
<dbReference type="GeneID" id="3644083"/>
<dbReference type="KEGG" id="cal:CAALFM_C206130WA"/>
<dbReference type="CGD" id="CAL0000183710">
    <property type="gene designation" value="CSM3"/>
</dbReference>
<dbReference type="VEuPathDB" id="FungiDB:C2_06130W_A"/>
<dbReference type="eggNOG" id="KOG3004">
    <property type="taxonomic scope" value="Eukaryota"/>
</dbReference>
<dbReference type="HOGENOM" id="CLU_068092_0_0_1"/>
<dbReference type="InParanoid" id="Q59X26"/>
<dbReference type="OMA" id="ADMDDMW"/>
<dbReference type="OrthoDB" id="437078at2759"/>
<dbReference type="PRO" id="PR:Q59X26"/>
<dbReference type="Proteomes" id="UP000000559">
    <property type="component" value="Chromosome 2"/>
</dbReference>
<dbReference type="GO" id="GO:0031298">
    <property type="term" value="C:replication fork protection complex"/>
    <property type="evidence" value="ECO:0000318"/>
    <property type="project" value="GO_Central"/>
</dbReference>
<dbReference type="GO" id="GO:0003677">
    <property type="term" value="F:DNA binding"/>
    <property type="evidence" value="ECO:0000318"/>
    <property type="project" value="GO_Central"/>
</dbReference>
<dbReference type="GO" id="GO:0006974">
    <property type="term" value="P:DNA damage response"/>
    <property type="evidence" value="ECO:0000316"/>
    <property type="project" value="CGD"/>
</dbReference>
<dbReference type="GO" id="GO:0006281">
    <property type="term" value="P:DNA repair"/>
    <property type="evidence" value="ECO:0007669"/>
    <property type="project" value="UniProtKB-KW"/>
</dbReference>
<dbReference type="GO" id="GO:0000076">
    <property type="term" value="P:DNA replication checkpoint signaling"/>
    <property type="evidence" value="ECO:0000318"/>
    <property type="project" value="GO_Central"/>
</dbReference>
<dbReference type="GO" id="GO:0051321">
    <property type="term" value="P:meiotic cell cycle"/>
    <property type="evidence" value="ECO:0007669"/>
    <property type="project" value="UniProtKB-KW"/>
</dbReference>
<dbReference type="GO" id="GO:0043111">
    <property type="term" value="P:replication fork arrest"/>
    <property type="evidence" value="ECO:0000318"/>
    <property type="project" value="GO_Central"/>
</dbReference>
<dbReference type="GO" id="GO:0031297">
    <property type="term" value="P:replication fork processing"/>
    <property type="evidence" value="ECO:0007669"/>
    <property type="project" value="InterPro"/>
</dbReference>
<dbReference type="InterPro" id="IPR012923">
    <property type="entry name" value="Csm3"/>
</dbReference>
<dbReference type="InterPro" id="IPR040038">
    <property type="entry name" value="TIPIN/Csm3/Swi3"/>
</dbReference>
<dbReference type="PANTHER" id="PTHR13220">
    <property type="entry name" value="TIMELESS INTERACTING-RELATED"/>
    <property type="match status" value="1"/>
</dbReference>
<dbReference type="PANTHER" id="PTHR13220:SF11">
    <property type="entry name" value="TIMELESS-INTERACTING PROTEIN"/>
    <property type="match status" value="1"/>
</dbReference>
<dbReference type="Pfam" id="PF07962">
    <property type="entry name" value="Swi3"/>
    <property type="match status" value="1"/>
</dbReference>
<comment type="function">
    <text evidence="1">Forms a fork protection complex (FPC) with TOF1 and which is required for chromosome segregation during meiosis and DNA damage repair. FPC coordinates leading and lagging strand synthesis and moves with the replication fork. FPC stabilizes replication forks in a configuration that is recognized by replication checkpoint sensors (By similarity).</text>
</comment>
<comment type="subunit">
    <text evidence="1">Component of the fork protection complex (FPC) consisting of TOF1 and CSM3.</text>
</comment>
<comment type="subcellular location">
    <subcellularLocation>
        <location evidence="1">Nucleus</location>
    </subcellularLocation>
</comment>
<comment type="similarity">
    <text evidence="3">Belongs to the CSM3 family.</text>
</comment>
<gene>
    <name type="primary">CSM3</name>
    <name type="ordered locus">CAALFM_C206130WA</name>
    <name type="ORF">CaO19.11586</name>
    <name type="ORF">CaO19.4105</name>
</gene>
<keyword id="KW-0131">Cell cycle</keyword>
<keyword id="KW-0227">DNA damage</keyword>
<keyword id="KW-0234">DNA repair</keyword>
<keyword id="KW-0236">DNA replication inhibitor</keyword>
<keyword id="KW-0469">Meiosis</keyword>
<keyword id="KW-0539">Nucleus</keyword>
<keyword id="KW-1185">Reference proteome</keyword>
<name>CSM3_CANAL</name>
<protein>
    <recommendedName>
        <fullName>Chromosome segregation in meiosis protein 3</fullName>
    </recommendedName>
</protein>